<reference key="1">
    <citation type="journal article" date="2002" name="Proc. Natl. Acad. Sci. U.S.A.">
        <title>The genome sequence of the facultative intracellular pathogen Brucella melitensis.</title>
        <authorList>
            <person name="DelVecchio V.G."/>
            <person name="Kapatral V."/>
            <person name="Redkar R.J."/>
            <person name="Patra G."/>
            <person name="Mujer C."/>
            <person name="Los T."/>
            <person name="Ivanova N."/>
            <person name="Anderson I."/>
            <person name="Bhattacharyya A."/>
            <person name="Lykidis A."/>
            <person name="Reznik G."/>
            <person name="Jablonski L."/>
            <person name="Larsen N."/>
            <person name="D'Souza M."/>
            <person name="Bernal A."/>
            <person name="Mazur M."/>
            <person name="Goltsman E."/>
            <person name="Selkov E."/>
            <person name="Elzer P.H."/>
            <person name="Hagius S."/>
            <person name="O'Callaghan D."/>
            <person name="Letesson J.-J."/>
            <person name="Haselkorn R."/>
            <person name="Kyrpides N.C."/>
            <person name="Overbeek R."/>
        </authorList>
    </citation>
    <scope>NUCLEOTIDE SEQUENCE [LARGE SCALE GENOMIC DNA]</scope>
    <source>
        <strain>ATCC 23456 / CCUG 17765 / NCTC 10094 / 16M</strain>
    </source>
</reference>
<evidence type="ECO:0000255" key="1">
    <source>
        <dbReference type="HAMAP-Rule" id="MF_01631"/>
    </source>
</evidence>
<evidence type="ECO:0000305" key="2"/>
<dbReference type="EC" id="2.7.7.23" evidence="1"/>
<dbReference type="EC" id="2.3.1.157" evidence="1"/>
<dbReference type="EMBL" id="AE008918">
    <property type="protein sequence ID" value="AAL53926.1"/>
    <property type="status" value="ALT_INIT"/>
    <property type="molecule type" value="Genomic_DNA"/>
</dbReference>
<dbReference type="PIR" id="AC3595">
    <property type="entry name" value="AC3595"/>
</dbReference>
<dbReference type="RefSeq" id="WP_004681894.1">
    <property type="nucleotide sequence ID" value="NZ_GG703779.1"/>
</dbReference>
<dbReference type="SMR" id="Q8YC48"/>
<dbReference type="GeneID" id="29595262"/>
<dbReference type="KEGG" id="bme:BMEII0684"/>
<dbReference type="KEGG" id="bmel:DK63_2557"/>
<dbReference type="PATRIC" id="fig|224914.52.peg.2680"/>
<dbReference type="eggNOG" id="COG1207">
    <property type="taxonomic scope" value="Bacteria"/>
</dbReference>
<dbReference type="PhylomeDB" id="Q8YC48"/>
<dbReference type="UniPathway" id="UPA00113">
    <property type="reaction ID" value="UER00532"/>
</dbReference>
<dbReference type="UniPathway" id="UPA00113">
    <property type="reaction ID" value="UER00533"/>
</dbReference>
<dbReference type="UniPathway" id="UPA00973"/>
<dbReference type="Proteomes" id="UP000000419">
    <property type="component" value="Chromosome II"/>
</dbReference>
<dbReference type="GO" id="GO:0005737">
    <property type="term" value="C:cytoplasm"/>
    <property type="evidence" value="ECO:0007669"/>
    <property type="project" value="UniProtKB-SubCell"/>
</dbReference>
<dbReference type="GO" id="GO:0016020">
    <property type="term" value="C:membrane"/>
    <property type="evidence" value="ECO:0007669"/>
    <property type="project" value="GOC"/>
</dbReference>
<dbReference type="GO" id="GO:0019134">
    <property type="term" value="F:glucosamine-1-phosphate N-acetyltransferase activity"/>
    <property type="evidence" value="ECO:0007669"/>
    <property type="project" value="UniProtKB-UniRule"/>
</dbReference>
<dbReference type="GO" id="GO:0000287">
    <property type="term" value="F:magnesium ion binding"/>
    <property type="evidence" value="ECO:0007669"/>
    <property type="project" value="UniProtKB-UniRule"/>
</dbReference>
<dbReference type="GO" id="GO:0003977">
    <property type="term" value="F:UDP-N-acetylglucosamine diphosphorylase activity"/>
    <property type="evidence" value="ECO:0007669"/>
    <property type="project" value="UniProtKB-UniRule"/>
</dbReference>
<dbReference type="GO" id="GO:0000902">
    <property type="term" value="P:cell morphogenesis"/>
    <property type="evidence" value="ECO:0007669"/>
    <property type="project" value="UniProtKB-UniRule"/>
</dbReference>
<dbReference type="GO" id="GO:0071555">
    <property type="term" value="P:cell wall organization"/>
    <property type="evidence" value="ECO:0007669"/>
    <property type="project" value="UniProtKB-KW"/>
</dbReference>
<dbReference type="GO" id="GO:0009245">
    <property type="term" value="P:lipid A biosynthetic process"/>
    <property type="evidence" value="ECO:0007669"/>
    <property type="project" value="UniProtKB-UniRule"/>
</dbReference>
<dbReference type="GO" id="GO:0009252">
    <property type="term" value="P:peptidoglycan biosynthetic process"/>
    <property type="evidence" value="ECO:0007669"/>
    <property type="project" value="UniProtKB-UniRule"/>
</dbReference>
<dbReference type="GO" id="GO:0008360">
    <property type="term" value="P:regulation of cell shape"/>
    <property type="evidence" value="ECO:0007669"/>
    <property type="project" value="UniProtKB-KW"/>
</dbReference>
<dbReference type="GO" id="GO:0006048">
    <property type="term" value="P:UDP-N-acetylglucosamine biosynthetic process"/>
    <property type="evidence" value="ECO:0007669"/>
    <property type="project" value="UniProtKB-UniPathway"/>
</dbReference>
<dbReference type="CDD" id="cd02540">
    <property type="entry name" value="GT2_GlmU_N_bac"/>
    <property type="match status" value="1"/>
</dbReference>
<dbReference type="CDD" id="cd03353">
    <property type="entry name" value="LbH_GlmU_C"/>
    <property type="match status" value="1"/>
</dbReference>
<dbReference type="Gene3D" id="2.160.10.10">
    <property type="entry name" value="Hexapeptide repeat proteins"/>
    <property type="match status" value="1"/>
</dbReference>
<dbReference type="Gene3D" id="3.90.550.10">
    <property type="entry name" value="Spore Coat Polysaccharide Biosynthesis Protein SpsA, Chain A"/>
    <property type="match status" value="1"/>
</dbReference>
<dbReference type="HAMAP" id="MF_01631">
    <property type="entry name" value="GlmU"/>
    <property type="match status" value="1"/>
</dbReference>
<dbReference type="InterPro" id="IPR005882">
    <property type="entry name" value="Bifunctional_GlmU"/>
</dbReference>
<dbReference type="InterPro" id="IPR050065">
    <property type="entry name" value="GlmU-like"/>
</dbReference>
<dbReference type="InterPro" id="IPR038009">
    <property type="entry name" value="GlmU_C_LbH"/>
</dbReference>
<dbReference type="InterPro" id="IPR001451">
    <property type="entry name" value="Hexapep"/>
</dbReference>
<dbReference type="InterPro" id="IPR018357">
    <property type="entry name" value="Hexapep_transf_CS"/>
</dbReference>
<dbReference type="InterPro" id="IPR025877">
    <property type="entry name" value="MobA-like_NTP_Trfase"/>
</dbReference>
<dbReference type="InterPro" id="IPR029044">
    <property type="entry name" value="Nucleotide-diphossugar_trans"/>
</dbReference>
<dbReference type="InterPro" id="IPR011004">
    <property type="entry name" value="Trimer_LpxA-like_sf"/>
</dbReference>
<dbReference type="NCBIfam" id="TIGR01173">
    <property type="entry name" value="glmU"/>
    <property type="match status" value="1"/>
</dbReference>
<dbReference type="NCBIfam" id="NF010933">
    <property type="entry name" value="PRK14353.1"/>
    <property type="match status" value="1"/>
</dbReference>
<dbReference type="PANTHER" id="PTHR43584:SF3">
    <property type="entry name" value="BIFUNCTIONAL PROTEIN GLMU"/>
    <property type="match status" value="1"/>
</dbReference>
<dbReference type="PANTHER" id="PTHR43584">
    <property type="entry name" value="NUCLEOTIDYL TRANSFERASE"/>
    <property type="match status" value="1"/>
</dbReference>
<dbReference type="Pfam" id="PF00132">
    <property type="entry name" value="Hexapep"/>
    <property type="match status" value="1"/>
</dbReference>
<dbReference type="Pfam" id="PF12804">
    <property type="entry name" value="NTP_transf_3"/>
    <property type="match status" value="1"/>
</dbReference>
<dbReference type="SUPFAM" id="SSF53448">
    <property type="entry name" value="Nucleotide-diphospho-sugar transferases"/>
    <property type="match status" value="1"/>
</dbReference>
<dbReference type="SUPFAM" id="SSF51161">
    <property type="entry name" value="Trimeric LpxA-like enzymes"/>
    <property type="match status" value="1"/>
</dbReference>
<dbReference type="PROSITE" id="PS00101">
    <property type="entry name" value="HEXAPEP_TRANSFERASES"/>
    <property type="match status" value="1"/>
</dbReference>
<accession>Q8YC48</accession>
<protein>
    <recommendedName>
        <fullName evidence="1">Bifunctional protein GlmU</fullName>
    </recommendedName>
    <domain>
        <recommendedName>
            <fullName evidence="1">UDP-N-acetylglucosamine pyrophosphorylase</fullName>
            <ecNumber evidence="1">2.7.7.23</ecNumber>
        </recommendedName>
        <alternativeName>
            <fullName evidence="1">N-acetylglucosamine-1-phosphate uridyltransferase</fullName>
        </alternativeName>
    </domain>
    <domain>
        <recommendedName>
            <fullName evidence="1">Glucosamine-1-phosphate N-acetyltransferase</fullName>
            <ecNumber evidence="1">2.3.1.157</ecNumber>
        </recommendedName>
    </domain>
</protein>
<sequence length="454" mass="47905">MTDRTCLSIVLAAGEGTRMKSNLPKVLHRVAGLPLVCHVVNAVRGTGKSDVALVVGRGAEDVRSAVEKIAGPVSAFEQKERLGTAHAVLAAREAIARGYDDLLIVFGDTPLIEAQSLLAARERLAQGADLVVIGFRPASPHGYGRLIEEGGQLVAIIEEKEATDEQKKIGFCNGGLMALRGQHALALLDAVGNDNAKGEYYLTDIVAIAHGKGLNVTAIEVPVDNVIGINNRAELAEAETIWQNRKRRELMLSGVTLIAPETVFFSYDTVIEPDVVIEPNVFFGPSVHVASGALIHSFSHLEGAQVGEKAEIGPFARLRPGADLAEKSKVGNFCEVKNAKVGKGAKINHLAYIGDAVIGASSNIGAGTITCNYDGYNKFKTIIGDNAFIGSNSSLVAPVEIGDNAYIASGSVITADVPADALALGRARQETKEGRAKILREKYAAIKAAKSVSK</sequence>
<gene>
    <name evidence="1" type="primary">glmU</name>
    <name type="ordered locus">BMEII0684</name>
</gene>
<comment type="function">
    <text evidence="1">Catalyzes the last two sequential reactions in the de novo biosynthetic pathway for UDP-N-acetylglucosamine (UDP-GlcNAc). The C-terminal domain catalyzes the transfer of acetyl group from acetyl coenzyme A to glucosamine-1-phosphate (GlcN-1-P) to produce N-acetylglucosamine-1-phosphate (GlcNAc-1-P), which is converted into UDP-GlcNAc by the transfer of uridine 5-monophosphate (from uridine 5-triphosphate), a reaction catalyzed by the N-terminal domain.</text>
</comment>
<comment type="catalytic activity">
    <reaction evidence="1">
        <text>alpha-D-glucosamine 1-phosphate + acetyl-CoA = N-acetyl-alpha-D-glucosamine 1-phosphate + CoA + H(+)</text>
        <dbReference type="Rhea" id="RHEA:13725"/>
        <dbReference type="ChEBI" id="CHEBI:15378"/>
        <dbReference type="ChEBI" id="CHEBI:57287"/>
        <dbReference type="ChEBI" id="CHEBI:57288"/>
        <dbReference type="ChEBI" id="CHEBI:57776"/>
        <dbReference type="ChEBI" id="CHEBI:58516"/>
        <dbReference type="EC" id="2.3.1.157"/>
    </reaction>
</comment>
<comment type="catalytic activity">
    <reaction evidence="1">
        <text>N-acetyl-alpha-D-glucosamine 1-phosphate + UTP + H(+) = UDP-N-acetyl-alpha-D-glucosamine + diphosphate</text>
        <dbReference type="Rhea" id="RHEA:13509"/>
        <dbReference type="ChEBI" id="CHEBI:15378"/>
        <dbReference type="ChEBI" id="CHEBI:33019"/>
        <dbReference type="ChEBI" id="CHEBI:46398"/>
        <dbReference type="ChEBI" id="CHEBI:57705"/>
        <dbReference type="ChEBI" id="CHEBI:57776"/>
        <dbReference type="EC" id="2.7.7.23"/>
    </reaction>
</comment>
<comment type="cofactor">
    <cofactor evidence="1">
        <name>Mg(2+)</name>
        <dbReference type="ChEBI" id="CHEBI:18420"/>
    </cofactor>
    <text evidence="1">Binds 1 Mg(2+) ion per subunit.</text>
</comment>
<comment type="pathway">
    <text evidence="1">Nucleotide-sugar biosynthesis; UDP-N-acetyl-alpha-D-glucosamine biosynthesis; N-acetyl-alpha-D-glucosamine 1-phosphate from alpha-D-glucosamine 6-phosphate (route II): step 2/2.</text>
</comment>
<comment type="pathway">
    <text evidence="1">Nucleotide-sugar biosynthesis; UDP-N-acetyl-alpha-D-glucosamine biosynthesis; UDP-N-acetyl-alpha-D-glucosamine from N-acetyl-alpha-D-glucosamine 1-phosphate: step 1/1.</text>
</comment>
<comment type="pathway">
    <text evidence="1">Bacterial outer membrane biogenesis; LPS lipid A biosynthesis.</text>
</comment>
<comment type="subunit">
    <text evidence="1">Homotrimer.</text>
</comment>
<comment type="subcellular location">
    <subcellularLocation>
        <location evidence="1">Cytoplasm</location>
    </subcellularLocation>
</comment>
<comment type="similarity">
    <text evidence="1">In the N-terminal section; belongs to the N-acetylglucosamine-1-phosphate uridyltransferase family.</text>
</comment>
<comment type="similarity">
    <text evidence="1">In the C-terminal section; belongs to the transferase hexapeptide repeat family.</text>
</comment>
<comment type="sequence caution" evidence="2">
    <conflict type="erroneous initiation">
        <sequence resource="EMBL-CDS" id="AAL53926"/>
    </conflict>
</comment>
<name>GLMU_BRUME</name>
<proteinExistence type="inferred from homology"/>
<feature type="chain" id="PRO_0000233745" description="Bifunctional protein GlmU">
    <location>
        <begin position="1"/>
        <end position="454"/>
    </location>
</feature>
<feature type="region of interest" description="Pyrophosphorylase" evidence="1">
    <location>
        <begin position="1"/>
        <end position="232"/>
    </location>
</feature>
<feature type="region of interest" description="Linker" evidence="1">
    <location>
        <begin position="233"/>
        <end position="253"/>
    </location>
</feature>
<feature type="region of interest" description="N-acetyltransferase" evidence="1">
    <location>
        <begin position="254"/>
        <end position="454"/>
    </location>
</feature>
<feature type="active site" description="Proton acceptor" evidence="1">
    <location>
        <position position="349"/>
    </location>
</feature>
<feature type="binding site" evidence="1">
    <location>
        <begin position="11"/>
        <end position="14"/>
    </location>
    <ligand>
        <name>UDP-N-acetyl-alpha-D-glucosamine</name>
        <dbReference type="ChEBI" id="CHEBI:57705"/>
    </ligand>
</feature>
<feature type="binding site" evidence="1">
    <location>
        <position position="25"/>
    </location>
    <ligand>
        <name>UDP-N-acetyl-alpha-D-glucosamine</name>
        <dbReference type="ChEBI" id="CHEBI:57705"/>
    </ligand>
</feature>
<feature type="binding site" evidence="1">
    <location>
        <position position="78"/>
    </location>
    <ligand>
        <name>UDP-N-acetyl-alpha-D-glucosamine</name>
        <dbReference type="ChEBI" id="CHEBI:57705"/>
    </ligand>
</feature>
<feature type="binding site" evidence="1">
    <location>
        <begin position="83"/>
        <end position="84"/>
    </location>
    <ligand>
        <name>UDP-N-acetyl-alpha-D-glucosamine</name>
        <dbReference type="ChEBI" id="CHEBI:57705"/>
    </ligand>
</feature>
<feature type="binding site" evidence="1">
    <location>
        <position position="108"/>
    </location>
    <ligand>
        <name>Mg(2+)</name>
        <dbReference type="ChEBI" id="CHEBI:18420"/>
    </ligand>
</feature>
<feature type="binding site" evidence="1">
    <location>
        <position position="144"/>
    </location>
    <ligand>
        <name>UDP-N-acetyl-alpha-D-glucosamine</name>
        <dbReference type="ChEBI" id="CHEBI:57705"/>
    </ligand>
</feature>
<feature type="binding site" evidence="1">
    <location>
        <position position="158"/>
    </location>
    <ligand>
        <name>UDP-N-acetyl-alpha-D-glucosamine</name>
        <dbReference type="ChEBI" id="CHEBI:57705"/>
    </ligand>
</feature>
<feature type="binding site" evidence="1">
    <location>
        <position position="173"/>
    </location>
    <ligand>
        <name>UDP-N-acetyl-alpha-D-glucosamine</name>
        <dbReference type="ChEBI" id="CHEBI:57705"/>
    </ligand>
</feature>
<feature type="binding site" evidence="1">
    <location>
        <position position="230"/>
    </location>
    <ligand>
        <name>Mg(2+)</name>
        <dbReference type="ChEBI" id="CHEBI:18420"/>
    </ligand>
</feature>
<feature type="binding site" evidence="1">
    <location>
        <position position="230"/>
    </location>
    <ligand>
        <name>UDP-N-acetyl-alpha-D-glucosamine</name>
        <dbReference type="ChEBI" id="CHEBI:57705"/>
    </ligand>
</feature>
<feature type="binding site" evidence="1">
    <location>
        <position position="319"/>
    </location>
    <ligand>
        <name>UDP-N-acetyl-alpha-D-glucosamine</name>
        <dbReference type="ChEBI" id="CHEBI:57705"/>
    </ligand>
</feature>
<feature type="binding site" evidence="1">
    <location>
        <position position="337"/>
    </location>
    <ligand>
        <name>UDP-N-acetyl-alpha-D-glucosamine</name>
        <dbReference type="ChEBI" id="CHEBI:57705"/>
    </ligand>
</feature>
<feature type="binding site" evidence="1">
    <location>
        <position position="352"/>
    </location>
    <ligand>
        <name>UDP-N-acetyl-alpha-D-glucosamine</name>
        <dbReference type="ChEBI" id="CHEBI:57705"/>
    </ligand>
</feature>
<feature type="binding site" evidence="1">
    <location>
        <position position="363"/>
    </location>
    <ligand>
        <name>UDP-N-acetyl-alpha-D-glucosamine</name>
        <dbReference type="ChEBI" id="CHEBI:57705"/>
    </ligand>
</feature>
<feature type="binding site" evidence="1">
    <location>
        <position position="366"/>
    </location>
    <ligand>
        <name>acetyl-CoA</name>
        <dbReference type="ChEBI" id="CHEBI:57288"/>
    </ligand>
</feature>
<feature type="binding site" evidence="1">
    <location>
        <begin position="372"/>
        <end position="373"/>
    </location>
    <ligand>
        <name>acetyl-CoA</name>
        <dbReference type="ChEBI" id="CHEBI:57288"/>
    </ligand>
</feature>
<feature type="binding site" evidence="1">
    <location>
        <position position="391"/>
    </location>
    <ligand>
        <name>acetyl-CoA</name>
        <dbReference type="ChEBI" id="CHEBI:57288"/>
    </ligand>
</feature>
<feature type="binding site" evidence="1">
    <location>
        <position position="409"/>
    </location>
    <ligand>
        <name>acetyl-CoA</name>
        <dbReference type="ChEBI" id="CHEBI:57288"/>
    </ligand>
</feature>
<feature type="binding site" evidence="1">
    <location>
        <position position="426"/>
    </location>
    <ligand>
        <name>acetyl-CoA</name>
        <dbReference type="ChEBI" id="CHEBI:57288"/>
    </ligand>
</feature>
<keyword id="KW-0012">Acyltransferase</keyword>
<keyword id="KW-0133">Cell shape</keyword>
<keyword id="KW-0961">Cell wall biogenesis/degradation</keyword>
<keyword id="KW-0963">Cytoplasm</keyword>
<keyword id="KW-0460">Magnesium</keyword>
<keyword id="KW-0479">Metal-binding</keyword>
<keyword id="KW-0511">Multifunctional enzyme</keyword>
<keyword id="KW-0548">Nucleotidyltransferase</keyword>
<keyword id="KW-0573">Peptidoglycan synthesis</keyword>
<keyword id="KW-0677">Repeat</keyword>
<keyword id="KW-0808">Transferase</keyword>
<organism>
    <name type="scientific">Brucella melitensis biotype 1 (strain ATCC 23456 / CCUG 17765 / NCTC 10094 / 16M)</name>
    <dbReference type="NCBI Taxonomy" id="224914"/>
    <lineage>
        <taxon>Bacteria</taxon>
        <taxon>Pseudomonadati</taxon>
        <taxon>Pseudomonadota</taxon>
        <taxon>Alphaproteobacteria</taxon>
        <taxon>Hyphomicrobiales</taxon>
        <taxon>Brucellaceae</taxon>
        <taxon>Brucella/Ochrobactrum group</taxon>
        <taxon>Brucella</taxon>
    </lineage>
</organism>